<gene>
    <name type="primary">mbf-1</name>
    <name type="ORF">B8P8.060</name>
    <name type="ORF">NCU01422</name>
</gene>
<protein>
    <recommendedName>
        <fullName>Multiprotein-bridging factor 1</fullName>
    </recommendedName>
</protein>
<accession>Q871W6</accession>
<accession>Q1K6L8</accession>
<feature type="chain" id="PRO_0000149811" description="Multiprotein-bridging factor 1">
    <location>
        <begin position="1"/>
        <end position="160"/>
    </location>
</feature>
<feature type="domain" description="HTH cro/C1-type" evidence="2">
    <location>
        <begin position="88"/>
        <end position="147"/>
    </location>
</feature>
<feature type="DNA-binding region" description="H-T-H motif" evidence="2">
    <location>
        <begin position="104"/>
        <end position="123"/>
    </location>
</feature>
<proteinExistence type="inferred from homology"/>
<keyword id="KW-0010">Activator</keyword>
<keyword id="KW-0238">DNA-binding</keyword>
<keyword id="KW-1185">Reference proteome</keyword>
<keyword id="KW-0804">Transcription</keyword>
<keyword id="KW-0805">Transcription regulation</keyword>
<sequence length="160" mass="17180">MSAWDTDAVKIGKNVSRGGAGPRETVVRGKSALNAAQRSGNIIATEKKYAAGNTASKPGVEGQRLTMVDRSDDIVKPKTVSKEVGAAIQKARSAIMIGDKAMTQKELATRCNSTQAIIAQYERGEGVPDQKLLGNLERVLNVKLRGSDIGKPKFEKKEKK</sequence>
<dbReference type="EMBL" id="BX294018">
    <property type="protein sequence ID" value="CAD70873.1"/>
    <property type="molecule type" value="Genomic_DNA"/>
</dbReference>
<dbReference type="EMBL" id="CM002240">
    <property type="protein sequence ID" value="EAA31454.1"/>
    <property type="molecule type" value="Genomic_DNA"/>
</dbReference>
<dbReference type="RefSeq" id="XP_960690.1">
    <property type="nucleotide sequence ID" value="XM_955597.3"/>
</dbReference>
<dbReference type="SMR" id="Q871W6"/>
<dbReference type="FunCoup" id="Q871W6">
    <property type="interactions" value="741"/>
</dbReference>
<dbReference type="STRING" id="367110.Q871W6"/>
<dbReference type="PaxDb" id="5141-EFNCRP00000004142"/>
<dbReference type="EnsemblFungi" id="EAA31454">
    <property type="protein sequence ID" value="EAA31454"/>
    <property type="gene ID" value="NCU01422"/>
</dbReference>
<dbReference type="GeneID" id="3876837"/>
<dbReference type="KEGG" id="ncr:NCU01422"/>
<dbReference type="VEuPathDB" id="FungiDB:NCU01422"/>
<dbReference type="HOGENOM" id="CLU_112609_0_0_1"/>
<dbReference type="InParanoid" id="Q871W6"/>
<dbReference type="OMA" id="GKNKSCK"/>
<dbReference type="OrthoDB" id="10253401at2759"/>
<dbReference type="Proteomes" id="UP000001805">
    <property type="component" value="Chromosome 2, Linkage Group V"/>
</dbReference>
<dbReference type="GO" id="GO:0005634">
    <property type="term" value="C:nucleus"/>
    <property type="evidence" value="ECO:0000318"/>
    <property type="project" value="GO_Central"/>
</dbReference>
<dbReference type="GO" id="GO:0003677">
    <property type="term" value="F:DNA binding"/>
    <property type="evidence" value="ECO:0007669"/>
    <property type="project" value="UniProtKB-KW"/>
</dbReference>
<dbReference type="CDD" id="cd00093">
    <property type="entry name" value="HTH_XRE"/>
    <property type="match status" value="1"/>
</dbReference>
<dbReference type="FunFam" id="1.10.260.40:FF:000030">
    <property type="entry name" value="Coactivator bridging factor 1"/>
    <property type="match status" value="1"/>
</dbReference>
<dbReference type="Gene3D" id="1.10.260.40">
    <property type="entry name" value="lambda repressor-like DNA-binding domains"/>
    <property type="match status" value="1"/>
</dbReference>
<dbReference type="InterPro" id="IPR001387">
    <property type="entry name" value="Cro/C1-type_HTH"/>
</dbReference>
<dbReference type="InterPro" id="IPR010982">
    <property type="entry name" value="Lambda_DNA-bd_dom_sf"/>
</dbReference>
<dbReference type="InterPro" id="IPR013729">
    <property type="entry name" value="MBF1_N"/>
</dbReference>
<dbReference type="PANTHER" id="PTHR10245:SF15">
    <property type="entry name" value="ENDOTHELIAL DIFFERENTIATION-RELATED FACTOR 1"/>
    <property type="match status" value="1"/>
</dbReference>
<dbReference type="PANTHER" id="PTHR10245">
    <property type="entry name" value="ENDOTHELIAL DIFFERENTIATION-RELATED FACTOR 1 MULTIPROTEIN BRIDGING FACTOR 1"/>
    <property type="match status" value="1"/>
</dbReference>
<dbReference type="Pfam" id="PF01381">
    <property type="entry name" value="HTH_3"/>
    <property type="match status" value="1"/>
</dbReference>
<dbReference type="Pfam" id="PF08523">
    <property type="entry name" value="MBF1"/>
    <property type="match status" value="1"/>
</dbReference>
<dbReference type="SMART" id="SM00530">
    <property type="entry name" value="HTH_XRE"/>
    <property type="match status" value="1"/>
</dbReference>
<dbReference type="SUPFAM" id="SSF47413">
    <property type="entry name" value="lambda repressor-like DNA-binding domains"/>
    <property type="match status" value="1"/>
</dbReference>
<dbReference type="PROSITE" id="PS50943">
    <property type="entry name" value="HTH_CROC1"/>
    <property type="match status" value="1"/>
</dbReference>
<comment type="function">
    <text evidence="1">Transcriptional coactivator that stimulates GCN4-dependent transcriptional activity by bridging the DNA-binding region of GCN4 and TBP (SPT15), thereby recruiting TBP to GCN4-bound promoters. Involved in induction of the ribosome quality control (RQC) pathway; a pathway that degrades nascent peptide chains during problematic translation. Required to prevent stalled ribosomes from frameshifting.</text>
</comment>
<comment type="similarity">
    <text evidence="3">Belongs to the MBF1 family.</text>
</comment>
<reference key="1">
    <citation type="journal article" date="2003" name="Nucleic Acids Res.">
        <title>What's in the genome of a filamentous fungus? Analysis of the Neurospora genome sequence.</title>
        <authorList>
            <person name="Mannhaupt G."/>
            <person name="Montrone C."/>
            <person name="Haase D."/>
            <person name="Mewes H.-W."/>
            <person name="Aign V."/>
            <person name="Hoheisel J.D."/>
            <person name="Fartmann B."/>
            <person name="Nyakatura G."/>
            <person name="Kempken F."/>
            <person name="Maier J."/>
            <person name="Schulte U."/>
        </authorList>
    </citation>
    <scope>NUCLEOTIDE SEQUENCE [LARGE SCALE GENOMIC DNA]</scope>
    <source>
        <strain>ATCC 24698 / 74-OR23-1A / CBS 708.71 / DSM 1257 / FGSC 987</strain>
    </source>
</reference>
<reference key="2">
    <citation type="journal article" date="2003" name="Nature">
        <title>The genome sequence of the filamentous fungus Neurospora crassa.</title>
        <authorList>
            <person name="Galagan J.E."/>
            <person name="Calvo S.E."/>
            <person name="Borkovich K.A."/>
            <person name="Selker E.U."/>
            <person name="Read N.D."/>
            <person name="Jaffe D.B."/>
            <person name="FitzHugh W."/>
            <person name="Ma L.-J."/>
            <person name="Smirnov S."/>
            <person name="Purcell S."/>
            <person name="Rehman B."/>
            <person name="Elkins T."/>
            <person name="Engels R."/>
            <person name="Wang S."/>
            <person name="Nielsen C.B."/>
            <person name="Butler J."/>
            <person name="Endrizzi M."/>
            <person name="Qui D."/>
            <person name="Ianakiev P."/>
            <person name="Bell-Pedersen D."/>
            <person name="Nelson M.A."/>
            <person name="Werner-Washburne M."/>
            <person name="Selitrennikoff C.P."/>
            <person name="Kinsey J.A."/>
            <person name="Braun E.L."/>
            <person name="Zelter A."/>
            <person name="Schulte U."/>
            <person name="Kothe G.O."/>
            <person name="Jedd G."/>
            <person name="Mewes H.-W."/>
            <person name="Staben C."/>
            <person name="Marcotte E."/>
            <person name="Greenberg D."/>
            <person name="Roy A."/>
            <person name="Foley K."/>
            <person name="Naylor J."/>
            <person name="Stange-Thomann N."/>
            <person name="Barrett R."/>
            <person name="Gnerre S."/>
            <person name="Kamal M."/>
            <person name="Kamvysselis M."/>
            <person name="Mauceli E.W."/>
            <person name="Bielke C."/>
            <person name="Rudd S."/>
            <person name="Frishman D."/>
            <person name="Krystofova S."/>
            <person name="Rasmussen C."/>
            <person name="Metzenberg R.L."/>
            <person name="Perkins D.D."/>
            <person name="Kroken S."/>
            <person name="Cogoni C."/>
            <person name="Macino G."/>
            <person name="Catcheside D.E.A."/>
            <person name="Li W."/>
            <person name="Pratt R.J."/>
            <person name="Osmani S.A."/>
            <person name="DeSouza C.P.C."/>
            <person name="Glass N.L."/>
            <person name="Orbach M.J."/>
            <person name="Berglund J.A."/>
            <person name="Voelker R."/>
            <person name="Yarden O."/>
            <person name="Plamann M."/>
            <person name="Seiler S."/>
            <person name="Dunlap J.C."/>
            <person name="Radford A."/>
            <person name="Aramayo R."/>
            <person name="Natvig D.O."/>
            <person name="Alex L.A."/>
            <person name="Mannhaupt G."/>
            <person name="Ebbole D.J."/>
            <person name="Freitag M."/>
            <person name="Paulsen I."/>
            <person name="Sachs M.S."/>
            <person name="Lander E.S."/>
            <person name="Nusbaum C."/>
            <person name="Birren B.W."/>
        </authorList>
    </citation>
    <scope>NUCLEOTIDE SEQUENCE [LARGE SCALE GENOMIC DNA]</scope>
    <source>
        <strain>ATCC 24698 / 74-OR23-1A / CBS 708.71 / DSM 1257 / FGSC 987</strain>
    </source>
</reference>
<name>MBF1_NEUCR</name>
<evidence type="ECO:0000250" key="1">
    <source>
        <dbReference type="UniProtKB" id="O14467"/>
    </source>
</evidence>
<evidence type="ECO:0000255" key="2">
    <source>
        <dbReference type="PROSITE-ProRule" id="PRU00257"/>
    </source>
</evidence>
<evidence type="ECO:0000305" key="3"/>
<organism>
    <name type="scientific">Neurospora crassa (strain ATCC 24698 / 74-OR23-1A / CBS 708.71 / DSM 1257 / FGSC 987)</name>
    <dbReference type="NCBI Taxonomy" id="367110"/>
    <lineage>
        <taxon>Eukaryota</taxon>
        <taxon>Fungi</taxon>
        <taxon>Dikarya</taxon>
        <taxon>Ascomycota</taxon>
        <taxon>Pezizomycotina</taxon>
        <taxon>Sordariomycetes</taxon>
        <taxon>Sordariomycetidae</taxon>
        <taxon>Sordariales</taxon>
        <taxon>Sordariaceae</taxon>
        <taxon>Neurospora</taxon>
    </lineage>
</organism>